<protein>
    <recommendedName>
        <fullName evidence="1">1-deoxy-D-xylulose 5-phosphate reductoisomerase</fullName>
        <shortName evidence="1">DXP reductoisomerase</shortName>
        <ecNumber evidence="1">1.1.1.267</ecNumber>
    </recommendedName>
    <alternativeName>
        <fullName evidence="1">1-deoxyxylulose-5-phosphate reductoisomerase</fullName>
    </alternativeName>
    <alternativeName>
        <fullName evidence="1">2-C-methyl-D-erythritol 4-phosphate synthase</fullName>
    </alternativeName>
</protein>
<name>DXR_LISMH</name>
<sequence>MKKIILLGATGSIGTQTLAIIRENPEKFQVVALSFGRNMERGRAIIKEFKPKMVAVWHTRDRVTLEAEFPNVKFFNGLEGLREVATYLDGDVLLNAVMGSVGLLPTLDAIEAGKAIAIANKETLVTAGHLVMRAAKEKNISLLPVDSEHSAILQALNGENTERIEKIVLTASGGSFRDKTREQLSLVTVKEALKHPNWNMGNKLTIDSATMFNKGLEVMEAHWLFGVDYDDIEVVIQRESIIHSMVQFVDGSFIAQLGTPDMRMPIQYALTYPDRLYIPYEKEFRITDFSALHFEKVDYERFPALKLAYNAGKIGGTMPTVLNAANEIAVAGFLNGQVAFYNIEALVENAMNRHTSISDPDLDTILQVDQETRAYVKTLL</sequence>
<keyword id="KW-0414">Isoprene biosynthesis</keyword>
<keyword id="KW-0464">Manganese</keyword>
<keyword id="KW-0479">Metal-binding</keyword>
<keyword id="KW-0521">NADP</keyword>
<keyword id="KW-0560">Oxidoreductase</keyword>
<accession>B8DG10</accession>
<comment type="function">
    <text evidence="1">Catalyzes the NADPH-dependent rearrangement and reduction of 1-deoxy-D-xylulose-5-phosphate (DXP) to 2-C-methyl-D-erythritol 4-phosphate (MEP).</text>
</comment>
<comment type="catalytic activity">
    <reaction evidence="1">
        <text>2-C-methyl-D-erythritol 4-phosphate + NADP(+) = 1-deoxy-D-xylulose 5-phosphate + NADPH + H(+)</text>
        <dbReference type="Rhea" id="RHEA:13717"/>
        <dbReference type="ChEBI" id="CHEBI:15378"/>
        <dbReference type="ChEBI" id="CHEBI:57783"/>
        <dbReference type="ChEBI" id="CHEBI:57792"/>
        <dbReference type="ChEBI" id="CHEBI:58262"/>
        <dbReference type="ChEBI" id="CHEBI:58349"/>
        <dbReference type="EC" id="1.1.1.267"/>
    </reaction>
    <physiologicalReaction direction="right-to-left" evidence="1">
        <dbReference type="Rhea" id="RHEA:13719"/>
    </physiologicalReaction>
</comment>
<comment type="cofactor">
    <cofactor evidence="1">
        <name>Mg(2+)</name>
        <dbReference type="ChEBI" id="CHEBI:18420"/>
    </cofactor>
    <cofactor evidence="1">
        <name>Mn(2+)</name>
        <dbReference type="ChEBI" id="CHEBI:29035"/>
    </cofactor>
</comment>
<comment type="pathway">
    <text evidence="1">Isoprenoid biosynthesis; isopentenyl diphosphate biosynthesis via DXP pathway; isopentenyl diphosphate from 1-deoxy-D-xylulose 5-phosphate: step 1/6.</text>
</comment>
<comment type="similarity">
    <text evidence="1">Belongs to the DXR family.</text>
</comment>
<dbReference type="EC" id="1.1.1.267" evidence="1"/>
<dbReference type="EMBL" id="CP001175">
    <property type="protein sequence ID" value="ACK39600.1"/>
    <property type="molecule type" value="Genomic_DNA"/>
</dbReference>
<dbReference type="RefSeq" id="WP_012581386.1">
    <property type="nucleotide sequence ID" value="NC_011660.1"/>
</dbReference>
<dbReference type="SMR" id="B8DG10"/>
<dbReference type="KEGG" id="lmh:LMHCC_1253"/>
<dbReference type="HOGENOM" id="CLU_035714_4_0_9"/>
<dbReference type="UniPathway" id="UPA00056">
    <property type="reaction ID" value="UER00092"/>
</dbReference>
<dbReference type="GO" id="GO:0030604">
    <property type="term" value="F:1-deoxy-D-xylulose-5-phosphate reductoisomerase activity"/>
    <property type="evidence" value="ECO:0007669"/>
    <property type="project" value="UniProtKB-UniRule"/>
</dbReference>
<dbReference type="GO" id="GO:0030145">
    <property type="term" value="F:manganese ion binding"/>
    <property type="evidence" value="ECO:0007669"/>
    <property type="project" value="TreeGrafter"/>
</dbReference>
<dbReference type="GO" id="GO:0070402">
    <property type="term" value="F:NADPH binding"/>
    <property type="evidence" value="ECO:0007669"/>
    <property type="project" value="InterPro"/>
</dbReference>
<dbReference type="GO" id="GO:0051484">
    <property type="term" value="P:isopentenyl diphosphate biosynthetic process, methylerythritol 4-phosphate pathway involved in terpenoid biosynthetic process"/>
    <property type="evidence" value="ECO:0007669"/>
    <property type="project" value="TreeGrafter"/>
</dbReference>
<dbReference type="FunFam" id="1.10.1740.10:FF:000005">
    <property type="entry name" value="1-deoxy-D-xylulose 5-phosphate reductoisomerase"/>
    <property type="match status" value="1"/>
</dbReference>
<dbReference type="FunFam" id="3.40.50.720:FF:000045">
    <property type="entry name" value="1-deoxy-D-xylulose 5-phosphate reductoisomerase"/>
    <property type="match status" value="1"/>
</dbReference>
<dbReference type="Gene3D" id="1.10.1740.10">
    <property type="match status" value="1"/>
</dbReference>
<dbReference type="Gene3D" id="3.40.50.720">
    <property type="entry name" value="NAD(P)-binding Rossmann-like Domain"/>
    <property type="match status" value="1"/>
</dbReference>
<dbReference type="HAMAP" id="MF_00183">
    <property type="entry name" value="DXP_reductoisom"/>
    <property type="match status" value="1"/>
</dbReference>
<dbReference type="InterPro" id="IPR003821">
    <property type="entry name" value="DXP_reductoisomerase"/>
</dbReference>
<dbReference type="InterPro" id="IPR013644">
    <property type="entry name" value="DXP_reductoisomerase_C"/>
</dbReference>
<dbReference type="InterPro" id="IPR013512">
    <property type="entry name" value="DXP_reductoisomerase_N"/>
</dbReference>
<dbReference type="InterPro" id="IPR026877">
    <property type="entry name" value="DXPR_C"/>
</dbReference>
<dbReference type="InterPro" id="IPR036169">
    <property type="entry name" value="DXPR_C_sf"/>
</dbReference>
<dbReference type="InterPro" id="IPR036291">
    <property type="entry name" value="NAD(P)-bd_dom_sf"/>
</dbReference>
<dbReference type="NCBIfam" id="TIGR00243">
    <property type="entry name" value="Dxr"/>
    <property type="match status" value="1"/>
</dbReference>
<dbReference type="NCBIfam" id="NF009114">
    <property type="entry name" value="PRK12464.1"/>
    <property type="match status" value="1"/>
</dbReference>
<dbReference type="PANTHER" id="PTHR30525">
    <property type="entry name" value="1-DEOXY-D-XYLULOSE 5-PHOSPHATE REDUCTOISOMERASE"/>
    <property type="match status" value="1"/>
</dbReference>
<dbReference type="PANTHER" id="PTHR30525:SF0">
    <property type="entry name" value="1-DEOXY-D-XYLULOSE 5-PHOSPHATE REDUCTOISOMERASE, CHLOROPLASTIC"/>
    <property type="match status" value="1"/>
</dbReference>
<dbReference type="Pfam" id="PF08436">
    <property type="entry name" value="DXP_redisom_C"/>
    <property type="match status" value="1"/>
</dbReference>
<dbReference type="Pfam" id="PF02670">
    <property type="entry name" value="DXP_reductoisom"/>
    <property type="match status" value="1"/>
</dbReference>
<dbReference type="Pfam" id="PF13288">
    <property type="entry name" value="DXPR_C"/>
    <property type="match status" value="1"/>
</dbReference>
<dbReference type="PIRSF" id="PIRSF006205">
    <property type="entry name" value="Dxp_reductismrs"/>
    <property type="match status" value="1"/>
</dbReference>
<dbReference type="SUPFAM" id="SSF69055">
    <property type="entry name" value="1-deoxy-D-xylulose-5-phosphate reductoisomerase, C-terminal domain"/>
    <property type="match status" value="1"/>
</dbReference>
<dbReference type="SUPFAM" id="SSF55347">
    <property type="entry name" value="Glyceraldehyde-3-phosphate dehydrogenase-like, C-terminal domain"/>
    <property type="match status" value="1"/>
</dbReference>
<dbReference type="SUPFAM" id="SSF51735">
    <property type="entry name" value="NAD(P)-binding Rossmann-fold domains"/>
    <property type="match status" value="1"/>
</dbReference>
<proteinExistence type="inferred from homology"/>
<feature type="chain" id="PRO_1000124097" description="1-deoxy-D-xylulose 5-phosphate reductoisomerase">
    <location>
        <begin position="1"/>
        <end position="380"/>
    </location>
</feature>
<feature type="binding site" evidence="1">
    <location>
        <position position="10"/>
    </location>
    <ligand>
        <name>NADPH</name>
        <dbReference type="ChEBI" id="CHEBI:57783"/>
    </ligand>
</feature>
<feature type="binding site" evidence="1">
    <location>
        <position position="11"/>
    </location>
    <ligand>
        <name>NADPH</name>
        <dbReference type="ChEBI" id="CHEBI:57783"/>
    </ligand>
</feature>
<feature type="binding site" evidence="1">
    <location>
        <position position="12"/>
    </location>
    <ligand>
        <name>NADPH</name>
        <dbReference type="ChEBI" id="CHEBI:57783"/>
    </ligand>
</feature>
<feature type="binding site" evidence="1">
    <location>
        <position position="13"/>
    </location>
    <ligand>
        <name>NADPH</name>
        <dbReference type="ChEBI" id="CHEBI:57783"/>
    </ligand>
</feature>
<feature type="binding site" evidence="1">
    <location>
        <position position="36"/>
    </location>
    <ligand>
        <name>NADPH</name>
        <dbReference type="ChEBI" id="CHEBI:57783"/>
    </ligand>
</feature>
<feature type="binding site" evidence="1">
    <location>
        <position position="37"/>
    </location>
    <ligand>
        <name>NADPH</name>
        <dbReference type="ChEBI" id="CHEBI:57783"/>
    </ligand>
</feature>
<feature type="binding site" evidence="1">
    <location>
        <position position="38"/>
    </location>
    <ligand>
        <name>NADPH</name>
        <dbReference type="ChEBI" id="CHEBI:57783"/>
    </ligand>
</feature>
<feature type="binding site" evidence="1">
    <location>
        <position position="120"/>
    </location>
    <ligand>
        <name>NADPH</name>
        <dbReference type="ChEBI" id="CHEBI:57783"/>
    </ligand>
</feature>
<feature type="binding site" evidence="1">
    <location>
        <position position="121"/>
    </location>
    <ligand>
        <name>1-deoxy-D-xylulose 5-phosphate</name>
        <dbReference type="ChEBI" id="CHEBI:57792"/>
    </ligand>
</feature>
<feature type="binding site" evidence="1">
    <location>
        <position position="122"/>
    </location>
    <ligand>
        <name>NADPH</name>
        <dbReference type="ChEBI" id="CHEBI:57783"/>
    </ligand>
</feature>
<feature type="binding site" evidence="1">
    <location>
        <position position="146"/>
    </location>
    <ligand>
        <name>Mn(2+)</name>
        <dbReference type="ChEBI" id="CHEBI:29035"/>
    </ligand>
</feature>
<feature type="binding site" evidence="1">
    <location>
        <position position="147"/>
    </location>
    <ligand>
        <name>1-deoxy-D-xylulose 5-phosphate</name>
        <dbReference type="ChEBI" id="CHEBI:57792"/>
    </ligand>
</feature>
<feature type="binding site" evidence="1">
    <location>
        <position position="148"/>
    </location>
    <ligand>
        <name>1-deoxy-D-xylulose 5-phosphate</name>
        <dbReference type="ChEBI" id="CHEBI:57792"/>
    </ligand>
</feature>
<feature type="binding site" evidence="1">
    <location>
        <position position="148"/>
    </location>
    <ligand>
        <name>Mn(2+)</name>
        <dbReference type="ChEBI" id="CHEBI:29035"/>
    </ligand>
</feature>
<feature type="binding site" evidence="1">
    <location>
        <position position="172"/>
    </location>
    <ligand>
        <name>1-deoxy-D-xylulose 5-phosphate</name>
        <dbReference type="ChEBI" id="CHEBI:57792"/>
    </ligand>
</feature>
<feature type="binding site" evidence="1">
    <location>
        <position position="195"/>
    </location>
    <ligand>
        <name>1-deoxy-D-xylulose 5-phosphate</name>
        <dbReference type="ChEBI" id="CHEBI:57792"/>
    </ligand>
</feature>
<feature type="binding site" evidence="1">
    <location>
        <position position="201"/>
    </location>
    <ligand>
        <name>NADPH</name>
        <dbReference type="ChEBI" id="CHEBI:57783"/>
    </ligand>
</feature>
<feature type="binding site" evidence="1">
    <location>
        <position position="208"/>
    </location>
    <ligand>
        <name>1-deoxy-D-xylulose 5-phosphate</name>
        <dbReference type="ChEBI" id="CHEBI:57792"/>
    </ligand>
</feature>
<feature type="binding site" evidence="1">
    <location>
        <position position="213"/>
    </location>
    <ligand>
        <name>1-deoxy-D-xylulose 5-phosphate</name>
        <dbReference type="ChEBI" id="CHEBI:57792"/>
    </ligand>
</feature>
<feature type="binding site" evidence="1">
    <location>
        <position position="214"/>
    </location>
    <ligand>
        <name>1-deoxy-D-xylulose 5-phosphate</name>
        <dbReference type="ChEBI" id="CHEBI:57792"/>
    </ligand>
</feature>
<feature type="binding site" evidence="1">
    <location>
        <position position="217"/>
    </location>
    <ligand>
        <name>1-deoxy-D-xylulose 5-phosphate</name>
        <dbReference type="ChEBI" id="CHEBI:57792"/>
    </ligand>
</feature>
<feature type="binding site" evidence="1">
    <location>
        <position position="217"/>
    </location>
    <ligand>
        <name>Mn(2+)</name>
        <dbReference type="ChEBI" id="CHEBI:29035"/>
    </ligand>
</feature>
<gene>
    <name evidence="1" type="primary">dxr</name>
    <name type="ordered locus">LMHCC_1253</name>
</gene>
<reference key="1">
    <citation type="journal article" date="2011" name="J. Bacteriol.">
        <title>Genome sequence of lineage III Listeria monocytogenes strain HCC23.</title>
        <authorList>
            <person name="Steele C.L."/>
            <person name="Donaldson J.R."/>
            <person name="Paul D."/>
            <person name="Banes M.M."/>
            <person name="Arick T."/>
            <person name="Bridges S.M."/>
            <person name="Lawrence M.L."/>
        </authorList>
    </citation>
    <scope>NUCLEOTIDE SEQUENCE [LARGE SCALE GENOMIC DNA]</scope>
    <source>
        <strain>HCC23</strain>
    </source>
</reference>
<evidence type="ECO:0000255" key="1">
    <source>
        <dbReference type="HAMAP-Rule" id="MF_00183"/>
    </source>
</evidence>
<organism>
    <name type="scientific">Listeria monocytogenes serotype 4a (strain HCC23)</name>
    <dbReference type="NCBI Taxonomy" id="552536"/>
    <lineage>
        <taxon>Bacteria</taxon>
        <taxon>Bacillati</taxon>
        <taxon>Bacillota</taxon>
        <taxon>Bacilli</taxon>
        <taxon>Bacillales</taxon>
        <taxon>Listeriaceae</taxon>
        <taxon>Listeria</taxon>
    </lineage>
</organism>